<protein>
    <recommendedName>
        <fullName evidence="6">E3 ubiquitin-protein ligase RNF34</fullName>
        <ecNumber evidence="2">2.3.2.27</ecNumber>
    </recommendedName>
    <alternativeName>
        <fullName>RING finger protein 34</fullName>
    </alternativeName>
    <alternativeName>
        <fullName evidence="6">RING-type E3 ubiquitin transferase RNF34</fullName>
    </alternativeName>
</protein>
<dbReference type="EC" id="2.3.2.27" evidence="2"/>
<dbReference type="EMBL" id="BT020924">
    <property type="protein sequence ID" value="AAX08941.1"/>
    <property type="molecule type" value="mRNA"/>
</dbReference>
<dbReference type="RefSeq" id="NP_001014858.1">
    <property type="nucleotide sequence ID" value="NM_001014858.1"/>
</dbReference>
<dbReference type="SMR" id="Q5E9J6"/>
<dbReference type="FunCoup" id="Q5E9J6">
    <property type="interactions" value="3887"/>
</dbReference>
<dbReference type="STRING" id="9913.ENSBTAP00000002986"/>
<dbReference type="PaxDb" id="9913-ENSBTAP00000002986"/>
<dbReference type="GeneID" id="506764"/>
<dbReference type="KEGG" id="bta:506764"/>
<dbReference type="CTD" id="80196"/>
<dbReference type="VEuPathDB" id="HostDB:ENSBTAG00000002315"/>
<dbReference type="eggNOG" id="KOG4275">
    <property type="taxonomic scope" value="Eukaryota"/>
</dbReference>
<dbReference type="HOGENOM" id="CLU_041431_1_0_1"/>
<dbReference type="InParanoid" id="Q5E9J6"/>
<dbReference type="OMA" id="SYSGCCE"/>
<dbReference type="OrthoDB" id="3045089at2759"/>
<dbReference type="TreeFam" id="TF325195"/>
<dbReference type="Reactome" id="R-BTA-6804757">
    <property type="pathway name" value="Regulation of TP53 Degradation"/>
</dbReference>
<dbReference type="Reactome" id="R-BTA-983168">
    <property type="pathway name" value="Antigen processing: Ubiquitination &amp; Proteasome degradation"/>
</dbReference>
<dbReference type="UniPathway" id="UPA00143"/>
<dbReference type="Proteomes" id="UP000009136">
    <property type="component" value="Chromosome 17"/>
</dbReference>
<dbReference type="Bgee" id="ENSBTAG00000002315">
    <property type="expression patterns" value="Expressed in oocyte and 108 other cell types or tissues"/>
</dbReference>
<dbReference type="GO" id="GO:0005737">
    <property type="term" value="C:cytoplasm"/>
    <property type="evidence" value="ECO:0000250"/>
    <property type="project" value="UniProtKB"/>
</dbReference>
<dbReference type="GO" id="GO:0005829">
    <property type="term" value="C:cytosol"/>
    <property type="evidence" value="ECO:0007669"/>
    <property type="project" value="UniProtKB-SubCell"/>
</dbReference>
<dbReference type="GO" id="GO:0012505">
    <property type="term" value="C:endomembrane system"/>
    <property type="evidence" value="ECO:0007669"/>
    <property type="project" value="UniProtKB-SubCell"/>
</dbReference>
<dbReference type="GO" id="GO:0016607">
    <property type="term" value="C:nuclear speck"/>
    <property type="evidence" value="ECO:0007669"/>
    <property type="project" value="UniProtKB-SubCell"/>
</dbReference>
<dbReference type="GO" id="GO:0005634">
    <property type="term" value="C:nucleus"/>
    <property type="evidence" value="ECO:0000250"/>
    <property type="project" value="UniProtKB"/>
</dbReference>
<dbReference type="GO" id="GO:0005886">
    <property type="term" value="C:plasma membrane"/>
    <property type="evidence" value="ECO:0000250"/>
    <property type="project" value="UniProtKB"/>
</dbReference>
<dbReference type="GO" id="GO:1901981">
    <property type="term" value="F:phosphatidylinositol phosphate binding"/>
    <property type="evidence" value="ECO:0000250"/>
    <property type="project" value="UniProtKB"/>
</dbReference>
<dbReference type="GO" id="GO:0061630">
    <property type="term" value="F:ubiquitin protein ligase activity"/>
    <property type="evidence" value="ECO:0000250"/>
    <property type="project" value="UniProtKB"/>
</dbReference>
<dbReference type="GO" id="GO:0008270">
    <property type="term" value="F:zinc ion binding"/>
    <property type="evidence" value="ECO:0007669"/>
    <property type="project" value="UniProtKB-KW"/>
</dbReference>
<dbReference type="GO" id="GO:0006915">
    <property type="term" value="P:apoptotic process"/>
    <property type="evidence" value="ECO:0007669"/>
    <property type="project" value="UniProtKB-KW"/>
</dbReference>
<dbReference type="GO" id="GO:1902042">
    <property type="term" value="P:negative regulation of extrinsic apoptotic signaling pathway via death domain receptors"/>
    <property type="evidence" value="ECO:0000250"/>
    <property type="project" value="UniProtKB"/>
</dbReference>
<dbReference type="GO" id="GO:1901797">
    <property type="term" value="P:negative regulation of signal transduction by p53 class mediator"/>
    <property type="evidence" value="ECO:0000250"/>
    <property type="project" value="UniProtKB"/>
</dbReference>
<dbReference type="GO" id="GO:0035872">
    <property type="term" value="P:nucleotide-binding domain, leucine rich repeat containing receptor signaling pathway"/>
    <property type="evidence" value="ECO:0000250"/>
    <property type="project" value="UniProtKB"/>
</dbReference>
<dbReference type="GO" id="GO:0043161">
    <property type="term" value="P:proteasome-mediated ubiquitin-dependent protein catabolic process"/>
    <property type="evidence" value="ECO:0000250"/>
    <property type="project" value="UniProtKB"/>
</dbReference>
<dbReference type="GO" id="GO:0070936">
    <property type="term" value="P:protein K48-linked ubiquitination"/>
    <property type="evidence" value="ECO:0000250"/>
    <property type="project" value="UniProtKB"/>
</dbReference>
<dbReference type="GO" id="GO:0016567">
    <property type="term" value="P:protein ubiquitination"/>
    <property type="evidence" value="ECO:0000250"/>
    <property type="project" value="UniProtKB"/>
</dbReference>
<dbReference type="GO" id="GO:2000374">
    <property type="term" value="P:regulation of oxygen metabolic process"/>
    <property type="evidence" value="ECO:0000250"/>
    <property type="project" value="UniProtKB"/>
</dbReference>
<dbReference type="GO" id="GO:0006511">
    <property type="term" value="P:ubiquitin-dependent protein catabolic process"/>
    <property type="evidence" value="ECO:0000250"/>
    <property type="project" value="UniProtKB"/>
</dbReference>
<dbReference type="CDD" id="cd15769">
    <property type="entry name" value="FYVE_CARP1"/>
    <property type="match status" value="1"/>
</dbReference>
<dbReference type="CDD" id="cd16706">
    <property type="entry name" value="RING-HC_CARP1"/>
    <property type="match status" value="1"/>
</dbReference>
<dbReference type="FunFam" id="1.10.720.140:FF:000001">
    <property type="entry name" value="E3 ubiquitin-protein ligase RNF34 isoform X1"/>
    <property type="match status" value="1"/>
</dbReference>
<dbReference type="FunFam" id="3.30.40.10:FF:000110">
    <property type="entry name" value="E3 ubiquitin-protein ligase RNF34 isoform X1"/>
    <property type="match status" value="1"/>
</dbReference>
<dbReference type="Gene3D" id="1.10.720.140">
    <property type="match status" value="1"/>
</dbReference>
<dbReference type="Gene3D" id="1.10.720.30">
    <property type="entry name" value="SAP domain"/>
    <property type="match status" value="1"/>
</dbReference>
<dbReference type="Gene3D" id="3.30.40.10">
    <property type="entry name" value="Zinc/RING finger domain, C3HC4 (zinc finger)"/>
    <property type="match status" value="1"/>
</dbReference>
<dbReference type="InterPro" id="IPR049320">
    <property type="entry name" value="CARP1_2_FYVE"/>
</dbReference>
<dbReference type="InterPro" id="IPR049323">
    <property type="entry name" value="CARP1_FYVE"/>
</dbReference>
<dbReference type="InterPro" id="IPR051728">
    <property type="entry name" value="RING-FYVE_E3_ubiquitin-ligase"/>
</dbReference>
<dbReference type="InterPro" id="IPR055111">
    <property type="entry name" value="RNF34L-like_HeH"/>
</dbReference>
<dbReference type="InterPro" id="IPR036361">
    <property type="entry name" value="SAP_dom_sf"/>
</dbReference>
<dbReference type="InterPro" id="IPR011011">
    <property type="entry name" value="Znf_FYVE_PHD"/>
</dbReference>
<dbReference type="InterPro" id="IPR001841">
    <property type="entry name" value="Znf_RING"/>
</dbReference>
<dbReference type="InterPro" id="IPR013083">
    <property type="entry name" value="Znf_RING/FYVE/PHD"/>
</dbReference>
<dbReference type="PANTHER" id="PTHR14879">
    <property type="entry name" value="CASPASE REGULATOR, RING FINGER DOMAIN-CONTAINING"/>
    <property type="match status" value="1"/>
</dbReference>
<dbReference type="PANTHER" id="PTHR14879:SF3">
    <property type="entry name" value="E3 UBIQUITIN-PROTEIN LIGASE RNF34"/>
    <property type="match status" value="1"/>
</dbReference>
<dbReference type="Pfam" id="PF21272">
    <property type="entry name" value="FYVE_CARP1-2"/>
    <property type="match status" value="1"/>
</dbReference>
<dbReference type="Pfam" id="PF22968">
    <property type="entry name" value="RNF34L-like_3rd"/>
    <property type="match status" value="1"/>
</dbReference>
<dbReference type="Pfam" id="PF23632">
    <property type="entry name" value="SAP_RNF34_RFFL"/>
    <property type="match status" value="1"/>
</dbReference>
<dbReference type="Pfam" id="PF13920">
    <property type="entry name" value="zf-C3HC4_3"/>
    <property type="match status" value="1"/>
</dbReference>
<dbReference type="SMART" id="SM00184">
    <property type="entry name" value="RING"/>
    <property type="match status" value="1"/>
</dbReference>
<dbReference type="SUPFAM" id="SSF57903">
    <property type="entry name" value="FYVE/PHD zinc finger"/>
    <property type="match status" value="1"/>
</dbReference>
<dbReference type="SUPFAM" id="SSF57850">
    <property type="entry name" value="RING/U-box"/>
    <property type="match status" value="1"/>
</dbReference>
<dbReference type="SUPFAM" id="SSF68906">
    <property type="entry name" value="SAP domain"/>
    <property type="match status" value="1"/>
</dbReference>
<dbReference type="PROSITE" id="PS50089">
    <property type="entry name" value="ZF_RING_2"/>
    <property type="match status" value="1"/>
</dbReference>
<comment type="function">
    <text evidence="2">E3 ubiquitin-protein ligase that regulates several biological processes through the ubiquitin-mediated proteasomal degradation of various target proteins. Ubiquitinates the caspases CASP8 and CASP10, promoting their proteasomal degradation, to negatively regulate cell death downstream of death domain receptors in the extrinsic pathway of apoptosis. May mediate 'Lys-48'-linked polyubiquitination of RIPK1 and its subsequent proteasomal degradation thereby indirectly regulating the tumor necrosis factor-mediated signaling pathway. Negatively regulates p53/TP53 through its direct ubiquitination and targeting to proteasomal degradation. Indirectly, may also negatively regulate p53/TP53 through ubiquitination and degradation of SFN. Mediates PPARGC1A proteasomal degradation probably through ubiquitination thereby indirectly regulating the metabolism of brown fat cells. Possibly involved in innate immunity, through 'Lys-48'-linked polyubiquitination of NOD1 and its subsequent proteasomal degradation.</text>
</comment>
<comment type="catalytic activity">
    <reaction evidence="2">
        <text>S-ubiquitinyl-[E2 ubiquitin-conjugating enzyme]-L-cysteine + [acceptor protein]-L-lysine = [E2 ubiquitin-conjugating enzyme]-L-cysteine + N(6)-ubiquitinyl-[acceptor protein]-L-lysine.</text>
        <dbReference type="EC" id="2.3.2.27"/>
    </reaction>
</comment>
<comment type="pathway">
    <text evidence="2">Protein modification; protein ubiquitination.</text>
</comment>
<comment type="subunit">
    <text evidence="2">Interacts with CASP8 and CASP10. Interacts with p53/TP53; involved in p53/TP53 ubiquitination. Interacts (via RING-type zinc finger) with MDM2; the interaction stabilizes MDM2. Interacts (via RING-type zinc finger) with PPARGC1A. Interacts with NOD1.</text>
</comment>
<comment type="subcellular location">
    <subcellularLocation>
        <location evidence="2">Cell membrane</location>
        <topology evidence="2">Peripheral membrane protein</topology>
    </subcellularLocation>
    <subcellularLocation>
        <location evidence="1">Endomembrane system</location>
        <topology evidence="1">Peripheral membrane protein</topology>
    </subcellularLocation>
    <subcellularLocation>
        <location evidence="2">Nucleus</location>
    </subcellularLocation>
    <subcellularLocation>
        <location evidence="2">Nucleus speckle</location>
    </subcellularLocation>
    <subcellularLocation>
        <location evidence="2">Cytoplasm</location>
        <location evidence="2">Cytosol</location>
    </subcellularLocation>
</comment>
<comment type="domain">
    <text evidence="2">The RING-type zinc finger is required for the ubiquitination of target proteins.</text>
</comment>
<comment type="domain">
    <text evidence="2">The FYVE-type zinc finger domain is required for localization and may confer affinity for cellular compartments enriched in phosphatidylinositol 5-phosphate and phosphatidylinositol 3-phosphate phospholipids.</text>
</comment>
<comment type="PTM">
    <text evidence="1">Autoubiquitinated (in vitro).</text>
</comment>
<comment type="PTM">
    <text evidence="2">Proteolytically cleaved by caspases upon induction of apoptosis by TNF.</text>
</comment>
<gene>
    <name type="primary">RNF34</name>
</gene>
<evidence type="ECO:0000250" key="1">
    <source>
        <dbReference type="UniProtKB" id="Q6AYH3"/>
    </source>
</evidence>
<evidence type="ECO:0000250" key="2">
    <source>
        <dbReference type="UniProtKB" id="Q969K3"/>
    </source>
</evidence>
<evidence type="ECO:0000250" key="3">
    <source>
        <dbReference type="UniProtKB" id="Q99KR6"/>
    </source>
</evidence>
<evidence type="ECO:0000255" key="4">
    <source>
        <dbReference type="PROSITE-ProRule" id="PRU00175"/>
    </source>
</evidence>
<evidence type="ECO:0000256" key="5">
    <source>
        <dbReference type="SAM" id="MobiDB-lite"/>
    </source>
</evidence>
<evidence type="ECO:0000305" key="6"/>
<sequence>MKAGATSMWASCCGLLNEVMGTGAVRGQQSGFAGGTGPFRFTPNSDFSAYPPASAEGPNIVCKACGLSFSVFRKKHVCCDCKKDFCSVCSVLQENLRRCSTCHLLQETAFQRPQLMRLKVKDLRQYLILRNIPIDTCREKEDLVDLVLCHHRLGSEDDLDTSSLNSSRSQTSSFFTHSFFSNYTAPSATASSFQGELMGGDRTLGSGALAQEPSEIASANTEDDEDDDDDDDDDDDDDEENLEDRTPGLTKKRVRASLSDLSSLEDVEGMSVRQLKEILARNFVNYSGCCEKWELVEKVNRLYKENEENQKSYGERLQLQDEEDDSLCRICMDAVIDCVLLECGHMVTCTKCGKRMSECPICRQYVVRAVHVFKS</sequence>
<accession>Q5E9J6</accession>
<reference key="1">
    <citation type="journal article" date="2005" name="BMC Genomics">
        <title>Characterization of 954 bovine full-CDS cDNA sequences.</title>
        <authorList>
            <person name="Harhay G.P."/>
            <person name="Sonstegard T.S."/>
            <person name="Keele J.W."/>
            <person name="Heaton M.P."/>
            <person name="Clawson M.L."/>
            <person name="Snelling W.M."/>
            <person name="Wiedmann R.T."/>
            <person name="Van Tassell C.P."/>
            <person name="Smith T.P.L."/>
        </authorList>
    </citation>
    <scope>NUCLEOTIDE SEQUENCE [LARGE SCALE MRNA]</scope>
</reference>
<name>RNF34_BOVIN</name>
<feature type="chain" id="PRO_0000056071" description="E3 ubiquitin-protein ligase RNF34">
    <location>
        <begin position="1"/>
        <end position="375"/>
    </location>
</feature>
<feature type="domain" description="SAP 1">
    <location>
        <begin position="115"/>
        <end position="134"/>
    </location>
</feature>
<feature type="domain" description="SAP 2">
    <location>
        <begin position="267"/>
        <end position="281"/>
    </location>
</feature>
<feature type="zinc finger region" description="FYVE-type">
    <location>
        <begin position="56"/>
        <end position="107"/>
    </location>
</feature>
<feature type="zinc finger region" description="RING-type" evidence="4">
    <location>
        <begin position="328"/>
        <end position="363"/>
    </location>
</feature>
<feature type="region of interest" description="Disordered" evidence="5">
    <location>
        <begin position="202"/>
        <end position="250"/>
    </location>
</feature>
<feature type="compositionally biased region" description="Acidic residues" evidence="5">
    <location>
        <begin position="221"/>
        <end position="242"/>
    </location>
</feature>
<feature type="site" description="Cleavage; by caspase-3" evidence="2">
    <location>
        <begin position="227"/>
        <end position="228"/>
    </location>
</feature>
<feature type="modified residue" description="Phosphoserine" evidence="2">
    <location>
        <position position="169"/>
    </location>
</feature>
<feature type="modified residue" description="Phosphoserine" evidence="2">
    <location>
        <position position="257"/>
    </location>
</feature>
<feature type="modified residue" description="Phosphoserine" evidence="3">
    <location>
        <position position="259"/>
    </location>
</feature>
<organism>
    <name type="scientific">Bos taurus</name>
    <name type="common">Bovine</name>
    <dbReference type="NCBI Taxonomy" id="9913"/>
    <lineage>
        <taxon>Eukaryota</taxon>
        <taxon>Metazoa</taxon>
        <taxon>Chordata</taxon>
        <taxon>Craniata</taxon>
        <taxon>Vertebrata</taxon>
        <taxon>Euteleostomi</taxon>
        <taxon>Mammalia</taxon>
        <taxon>Eutheria</taxon>
        <taxon>Laurasiatheria</taxon>
        <taxon>Artiodactyla</taxon>
        <taxon>Ruminantia</taxon>
        <taxon>Pecora</taxon>
        <taxon>Bovidae</taxon>
        <taxon>Bovinae</taxon>
        <taxon>Bos</taxon>
    </lineage>
</organism>
<keyword id="KW-0053">Apoptosis</keyword>
<keyword id="KW-1003">Cell membrane</keyword>
<keyword id="KW-0963">Cytoplasm</keyword>
<keyword id="KW-0472">Membrane</keyword>
<keyword id="KW-0479">Metal-binding</keyword>
<keyword id="KW-0539">Nucleus</keyword>
<keyword id="KW-0597">Phosphoprotein</keyword>
<keyword id="KW-1185">Reference proteome</keyword>
<keyword id="KW-0677">Repeat</keyword>
<keyword id="KW-0808">Transferase</keyword>
<keyword id="KW-0832">Ubl conjugation</keyword>
<keyword id="KW-0833">Ubl conjugation pathway</keyword>
<keyword id="KW-0862">Zinc</keyword>
<keyword id="KW-0863">Zinc-finger</keyword>
<proteinExistence type="evidence at transcript level"/>